<evidence type="ECO:0000255" key="1">
    <source>
        <dbReference type="HAMAP-Rule" id="MF_00022"/>
    </source>
</evidence>
<keyword id="KW-0030">Aminoacyl-tRNA synthetase</keyword>
<keyword id="KW-0067">ATP-binding</keyword>
<keyword id="KW-0963">Cytoplasm</keyword>
<keyword id="KW-0436">Ligase</keyword>
<keyword id="KW-0547">Nucleotide-binding</keyword>
<keyword id="KW-0648">Protein biosynthesis</keyword>
<sequence length="513" mass="58403">MTNNVITRFAPSPSGFLHIGSARTALFNYLFARHHNGKFLLRIEDTDKERSTKEAVETIFSGLKWLGLDWNGEVIFQSKRNNLYKEAALKLLQNGKAYYCFTSQEEIERQRQQALENKQHFIFNSEWRDKDPSIYPTDIKPVIRLKTPREGSITIHDTLQGEVVIENSHIDDMVLLRADGTATYMLAVVVDDHDMGITHIIRGDDHLTNAARQLAIYQAFGYEVPSMTHIPLIHGADGAKLSKRHGALGVETYKDMGYLPESLCNYLLRLGWSHGDDEIISMTQAIDWFNLDSLGKSPSKLDFAKMNSLNAHYLRMLDNDSLTSKTVEILEQNYNKLLRKLAYRKEFEGNTERSTAAYIDIREDASTGLTYKLPLTVELPKKFKVSEQEIGYIKQAMPSLLVRSATLLELTRLAQIYLVDSPIIYNQDAKKIIENCDKNLIKQVIENLSELEQFDKESVQNKFKEIAAANDLKLNDIMPPVRALITGMTASPSVFEIAEILGKENILKRLKII</sequence>
<protein>
    <recommendedName>
        <fullName evidence="1">Glutamate--tRNA ligase 2</fullName>
        <ecNumber evidence="1">6.1.1.17</ecNumber>
    </recommendedName>
    <alternativeName>
        <fullName evidence="1">Glutamyl-tRNA synthetase 2</fullName>
        <shortName evidence="1">GluRS 2</shortName>
    </alternativeName>
</protein>
<organism>
    <name type="scientific">Rickettsia massiliae (strain Mtu5)</name>
    <dbReference type="NCBI Taxonomy" id="416276"/>
    <lineage>
        <taxon>Bacteria</taxon>
        <taxon>Pseudomonadati</taxon>
        <taxon>Pseudomonadota</taxon>
        <taxon>Alphaproteobacteria</taxon>
        <taxon>Rickettsiales</taxon>
        <taxon>Rickettsiaceae</taxon>
        <taxon>Rickettsieae</taxon>
        <taxon>Rickettsia</taxon>
        <taxon>spotted fever group</taxon>
    </lineage>
</organism>
<reference key="1">
    <citation type="journal article" date="2007" name="Genome Res.">
        <title>Lateral gene transfer between obligate intracellular bacteria: evidence from the Rickettsia massiliae genome.</title>
        <authorList>
            <person name="Blanc G."/>
            <person name="Ogata H."/>
            <person name="Robert C."/>
            <person name="Audic S."/>
            <person name="Claverie J.-M."/>
            <person name="Raoult D."/>
        </authorList>
    </citation>
    <scope>NUCLEOTIDE SEQUENCE [LARGE SCALE GENOMIC DNA]</scope>
    <source>
        <strain>Mtu5</strain>
    </source>
</reference>
<feature type="chain" id="PRO_0000367759" description="Glutamate--tRNA ligase 2">
    <location>
        <begin position="1"/>
        <end position="513"/>
    </location>
</feature>
<feature type="short sequence motif" description="'HIGH' region" evidence="1">
    <location>
        <begin position="11"/>
        <end position="21"/>
    </location>
</feature>
<feature type="short sequence motif" description="'KMSKS' region" evidence="1">
    <location>
        <begin position="240"/>
        <end position="244"/>
    </location>
</feature>
<feature type="binding site" evidence="1">
    <location>
        <position position="243"/>
    </location>
    <ligand>
        <name>ATP</name>
        <dbReference type="ChEBI" id="CHEBI:30616"/>
    </ligand>
</feature>
<proteinExistence type="inferred from homology"/>
<comment type="function">
    <text evidence="1">Catalyzes the attachment of glutamate to tRNA(Glu) in a two-step reaction: glutamate is first activated by ATP to form Glu-AMP and then transferred to the acceptor end of tRNA(Glu).</text>
</comment>
<comment type="catalytic activity">
    <reaction evidence="1">
        <text>tRNA(Glu) + L-glutamate + ATP = L-glutamyl-tRNA(Glu) + AMP + diphosphate</text>
        <dbReference type="Rhea" id="RHEA:23540"/>
        <dbReference type="Rhea" id="RHEA-COMP:9663"/>
        <dbReference type="Rhea" id="RHEA-COMP:9680"/>
        <dbReference type="ChEBI" id="CHEBI:29985"/>
        <dbReference type="ChEBI" id="CHEBI:30616"/>
        <dbReference type="ChEBI" id="CHEBI:33019"/>
        <dbReference type="ChEBI" id="CHEBI:78442"/>
        <dbReference type="ChEBI" id="CHEBI:78520"/>
        <dbReference type="ChEBI" id="CHEBI:456215"/>
        <dbReference type="EC" id="6.1.1.17"/>
    </reaction>
</comment>
<comment type="subunit">
    <text evidence="1">Monomer.</text>
</comment>
<comment type="subcellular location">
    <subcellularLocation>
        <location evidence="1">Cytoplasm</location>
    </subcellularLocation>
</comment>
<comment type="similarity">
    <text evidence="1">Belongs to the class-I aminoacyl-tRNA synthetase family. Glutamate--tRNA ligase type 1 subfamily.</text>
</comment>
<accession>A8F2B0</accession>
<name>SYE2_RICM5</name>
<dbReference type="EC" id="6.1.1.17" evidence="1"/>
<dbReference type="EMBL" id="CP000683">
    <property type="protein sequence ID" value="ABV85046.1"/>
    <property type="molecule type" value="Genomic_DNA"/>
</dbReference>
<dbReference type="RefSeq" id="WP_012153013.1">
    <property type="nucleotide sequence ID" value="NC_009900.1"/>
</dbReference>
<dbReference type="SMR" id="A8F2B0"/>
<dbReference type="KEGG" id="rms:RMA_0992"/>
<dbReference type="HOGENOM" id="CLU_015768_6_0_5"/>
<dbReference type="Proteomes" id="UP000001311">
    <property type="component" value="Chromosome"/>
</dbReference>
<dbReference type="GO" id="GO:0005829">
    <property type="term" value="C:cytosol"/>
    <property type="evidence" value="ECO:0007669"/>
    <property type="project" value="TreeGrafter"/>
</dbReference>
<dbReference type="GO" id="GO:0005524">
    <property type="term" value="F:ATP binding"/>
    <property type="evidence" value="ECO:0007669"/>
    <property type="project" value="UniProtKB-UniRule"/>
</dbReference>
<dbReference type="GO" id="GO:0004818">
    <property type="term" value="F:glutamate-tRNA ligase activity"/>
    <property type="evidence" value="ECO:0007669"/>
    <property type="project" value="UniProtKB-UniRule"/>
</dbReference>
<dbReference type="GO" id="GO:0000049">
    <property type="term" value="F:tRNA binding"/>
    <property type="evidence" value="ECO:0007669"/>
    <property type="project" value="InterPro"/>
</dbReference>
<dbReference type="GO" id="GO:0008270">
    <property type="term" value="F:zinc ion binding"/>
    <property type="evidence" value="ECO:0007669"/>
    <property type="project" value="InterPro"/>
</dbReference>
<dbReference type="GO" id="GO:0006424">
    <property type="term" value="P:glutamyl-tRNA aminoacylation"/>
    <property type="evidence" value="ECO:0007669"/>
    <property type="project" value="UniProtKB-UniRule"/>
</dbReference>
<dbReference type="CDD" id="cd00808">
    <property type="entry name" value="GluRS_core"/>
    <property type="match status" value="1"/>
</dbReference>
<dbReference type="FunFam" id="3.40.50.620:FF:000007">
    <property type="entry name" value="Glutamate--tRNA ligase"/>
    <property type="match status" value="1"/>
</dbReference>
<dbReference type="Gene3D" id="1.10.10.350">
    <property type="match status" value="1"/>
</dbReference>
<dbReference type="Gene3D" id="3.40.50.620">
    <property type="entry name" value="HUPs"/>
    <property type="match status" value="1"/>
</dbReference>
<dbReference type="HAMAP" id="MF_00022">
    <property type="entry name" value="Glu_tRNA_synth_type1"/>
    <property type="match status" value="1"/>
</dbReference>
<dbReference type="InterPro" id="IPR045462">
    <property type="entry name" value="aa-tRNA-synth_I_cd-bd"/>
</dbReference>
<dbReference type="InterPro" id="IPR020751">
    <property type="entry name" value="aa-tRNA-synth_I_codon-bd_sub2"/>
</dbReference>
<dbReference type="InterPro" id="IPR008925">
    <property type="entry name" value="aa_tRNA-synth_I_cd-bd_sf"/>
</dbReference>
<dbReference type="InterPro" id="IPR004527">
    <property type="entry name" value="Glu-tRNA-ligase_bac/mito"/>
</dbReference>
<dbReference type="InterPro" id="IPR000924">
    <property type="entry name" value="Glu/Gln-tRNA-synth"/>
</dbReference>
<dbReference type="InterPro" id="IPR020058">
    <property type="entry name" value="Glu/Gln-tRNA-synth_Ib_cat-dom"/>
</dbReference>
<dbReference type="InterPro" id="IPR049940">
    <property type="entry name" value="GluQ/Sye"/>
</dbReference>
<dbReference type="InterPro" id="IPR033910">
    <property type="entry name" value="GluRS_core"/>
</dbReference>
<dbReference type="InterPro" id="IPR014729">
    <property type="entry name" value="Rossmann-like_a/b/a_fold"/>
</dbReference>
<dbReference type="InterPro" id="IPR005728">
    <property type="entry name" value="RPE1"/>
</dbReference>
<dbReference type="NCBIfam" id="TIGR00464">
    <property type="entry name" value="gltX_bact"/>
    <property type="match status" value="1"/>
</dbReference>
<dbReference type="NCBIfam" id="TIGR01045">
    <property type="entry name" value="RPE1"/>
    <property type="match status" value="1"/>
</dbReference>
<dbReference type="PANTHER" id="PTHR43311">
    <property type="entry name" value="GLUTAMATE--TRNA LIGASE"/>
    <property type="match status" value="1"/>
</dbReference>
<dbReference type="PANTHER" id="PTHR43311:SF2">
    <property type="entry name" value="GLUTAMATE--TRNA LIGASE, MITOCHONDRIAL-RELATED"/>
    <property type="match status" value="1"/>
</dbReference>
<dbReference type="Pfam" id="PF19269">
    <property type="entry name" value="Anticodon_2"/>
    <property type="match status" value="1"/>
</dbReference>
<dbReference type="Pfam" id="PF00749">
    <property type="entry name" value="tRNA-synt_1c"/>
    <property type="match status" value="1"/>
</dbReference>
<dbReference type="PRINTS" id="PR00987">
    <property type="entry name" value="TRNASYNTHGLU"/>
</dbReference>
<dbReference type="SUPFAM" id="SSF48163">
    <property type="entry name" value="An anticodon-binding domain of class I aminoacyl-tRNA synthetases"/>
    <property type="match status" value="1"/>
</dbReference>
<dbReference type="SUPFAM" id="SSF52374">
    <property type="entry name" value="Nucleotidylyl transferase"/>
    <property type="match status" value="1"/>
</dbReference>
<gene>
    <name evidence="1" type="primary">gltX2</name>
    <name type="ordered locus">RMA_0992</name>
</gene>